<gene>
    <name type="primary">Timd4</name>
    <name type="synonym">Tim4</name>
</gene>
<keyword id="KW-0002">3D-structure</keyword>
<keyword id="KW-1015">Disulfide bond</keyword>
<keyword id="KW-0325">Glycoprotein</keyword>
<keyword id="KW-0393">Immunoglobulin domain</keyword>
<keyword id="KW-0472">Membrane</keyword>
<keyword id="KW-0597">Phosphoprotein</keyword>
<keyword id="KW-1185">Reference proteome</keyword>
<keyword id="KW-0732">Signal</keyword>
<keyword id="KW-0812">Transmembrane</keyword>
<keyword id="KW-1133">Transmembrane helix</keyword>
<organism>
    <name type="scientific">Mus musculus</name>
    <name type="common">Mouse</name>
    <dbReference type="NCBI Taxonomy" id="10090"/>
    <lineage>
        <taxon>Eukaryota</taxon>
        <taxon>Metazoa</taxon>
        <taxon>Chordata</taxon>
        <taxon>Craniata</taxon>
        <taxon>Vertebrata</taxon>
        <taxon>Euteleostomi</taxon>
        <taxon>Mammalia</taxon>
        <taxon>Eutheria</taxon>
        <taxon>Euarchontoglires</taxon>
        <taxon>Glires</taxon>
        <taxon>Rodentia</taxon>
        <taxon>Myomorpha</taxon>
        <taxon>Muroidea</taxon>
        <taxon>Muridae</taxon>
        <taxon>Murinae</taxon>
        <taxon>Mus</taxon>
        <taxon>Mus</taxon>
    </lineage>
</organism>
<dbReference type="EMBL" id="AY376717">
    <property type="protein sequence ID" value="AAR23484.1"/>
    <property type="molecule type" value="mRNA"/>
</dbReference>
<dbReference type="EMBL" id="AY376716">
    <property type="protein sequence ID" value="AAR23483.1"/>
    <property type="molecule type" value="mRNA"/>
</dbReference>
<dbReference type="CCDS" id="CCDS36137.1"/>
<dbReference type="RefSeq" id="NP_848874.3">
    <property type="nucleotide sequence ID" value="NM_178759.4"/>
</dbReference>
<dbReference type="PDB" id="3BI9">
    <property type="method" value="X-ray"/>
    <property type="resolution" value="2.95 A"/>
    <property type="chains" value="X=24-134"/>
</dbReference>
<dbReference type="PDB" id="3BIA">
    <property type="method" value="X-ray"/>
    <property type="resolution" value="2.20 A"/>
    <property type="chains" value="X=24-134"/>
</dbReference>
<dbReference type="PDB" id="3BIB">
    <property type="method" value="X-ray"/>
    <property type="resolution" value="2.50 A"/>
    <property type="chains" value="X=24-134"/>
</dbReference>
<dbReference type="PDBsum" id="3BI9"/>
<dbReference type="PDBsum" id="3BIA"/>
<dbReference type="PDBsum" id="3BIB"/>
<dbReference type="SMR" id="Q6U7R4"/>
<dbReference type="FunCoup" id="Q6U7R4">
    <property type="interactions" value="265"/>
</dbReference>
<dbReference type="IntAct" id="Q6U7R4">
    <property type="interactions" value="1"/>
</dbReference>
<dbReference type="STRING" id="10090.ENSMUSP00000069456"/>
<dbReference type="GlyCosmos" id="Q6U7R4">
    <property type="glycosylation" value="1 site, No reported glycans"/>
</dbReference>
<dbReference type="GlyGen" id="Q6U7R4">
    <property type="glycosylation" value="1 site"/>
</dbReference>
<dbReference type="iPTMnet" id="Q6U7R4"/>
<dbReference type="PhosphoSitePlus" id="Q6U7R4"/>
<dbReference type="SwissPalm" id="Q6U7R4"/>
<dbReference type="PaxDb" id="10090-ENSMUSP00000069456"/>
<dbReference type="PeptideAtlas" id="Q6U7R4"/>
<dbReference type="ProteomicsDB" id="259394"/>
<dbReference type="ABCD" id="Q6U7R4">
    <property type="antibodies" value="10 sequenced antibodies"/>
</dbReference>
<dbReference type="Antibodypedia" id="2737">
    <property type="antibodies" value="451 antibodies from 38 providers"/>
</dbReference>
<dbReference type="DNASU" id="276891"/>
<dbReference type="Ensembl" id="ENSMUST00000068877.7">
    <property type="protein sequence ID" value="ENSMUSP00000069456.7"/>
    <property type="gene ID" value="ENSMUSG00000055546.7"/>
</dbReference>
<dbReference type="GeneID" id="276891"/>
<dbReference type="KEGG" id="mmu:276891"/>
<dbReference type="UCSC" id="uc007iox.1">
    <property type="organism name" value="mouse"/>
</dbReference>
<dbReference type="AGR" id="MGI:2445125"/>
<dbReference type="CTD" id="91937"/>
<dbReference type="MGI" id="MGI:2445125">
    <property type="gene designation" value="Timd4"/>
</dbReference>
<dbReference type="VEuPathDB" id="HostDB:ENSMUSG00000055546"/>
<dbReference type="eggNOG" id="ENOG502S1A2">
    <property type="taxonomic scope" value="Eukaryota"/>
</dbReference>
<dbReference type="GeneTree" id="ENSGT00940000161609"/>
<dbReference type="HOGENOM" id="CLU_047504_0_1_1"/>
<dbReference type="InParanoid" id="Q6U7R4"/>
<dbReference type="OMA" id="HTDGTKV"/>
<dbReference type="OrthoDB" id="434099at2759"/>
<dbReference type="PhylomeDB" id="Q6U7R4"/>
<dbReference type="TreeFam" id="TF336163"/>
<dbReference type="BioGRID-ORCS" id="276891">
    <property type="hits" value="5 hits in 79 CRISPR screens"/>
</dbReference>
<dbReference type="EvolutionaryTrace" id="Q6U7R4"/>
<dbReference type="PRO" id="PR:Q6U7R4"/>
<dbReference type="Proteomes" id="UP000000589">
    <property type="component" value="Chromosome 11"/>
</dbReference>
<dbReference type="RNAct" id="Q6U7R4">
    <property type="molecule type" value="protein"/>
</dbReference>
<dbReference type="Bgee" id="ENSMUSG00000055546">
    <property type="expression patterns" value="Expressed in peripheral lymph node and 46 other cell types or tissues"/>
</dbReference>
<dbReference type="GO" id="GO:0016020">
    <property type="term" value="C:membrane"/>
    <property type="evidence" value="ECO:0007669"/>
    <property type="project" value="UniProtKB-SubCell"/>
</dbReference>
<dbReference type="GO" id="GO:0001786">
    <property type="term" value="F:phosphatidylserine binding"/>
    <property type="evidence" value="ECO:0000314"/>
    <property type="project" value="MGI"/>
</dbReference>
<dbReference type="GO" id="GO:0043277">
    <property type="term" value="P:apoptotic cell clearance"/>
    <property type="evidence" value="ECO:0000314"/>
    <property type="project" value="MGI"/>
</dbReference>
<dbReference type="FunFam" id="2.60.40.10:FF:000774">
    <property type="entry name" value="Hepatitis A virus cellular receptor 1"/>
    <property type="match status" value="1"/>
</dbReference>
<dbReference type="Gene3D" id="2.60.40.10">
    <property type="entry name" value="Immunoglobulins"/>
    <property type="match status" value="1"/>
</dbReference>
<dbReference type="InterPro" id="IPR007110">
    <property type="entry name" value="Ig-like_dom"/>
</dbReference>
<dbReference type="InterPro" id="IPR036179">
    <property type="entry name" value="Ig-like_dom_sf"/>
</dbReference>
<dbReference type="InterPro" id="IPR013783">
    <property type="entry name" value="Ig-like_fold"/>
</dbReference>
<dbReference type="InterPro" id="IPR003599">
    <property type="entry name" value="Ig_sub"/>
</dbReference>
<dbReference type="InterPro" id="IPR013106">
    <property type="entry name" value="Ig_V-set"/>
</dbReference>
<dbReference type="PANTHER" id="PTHR46608">
    <property type="entry name" value="T-CELL IMMUNOGLOBULIN AND MUCIN DOMAIN-CONTAINING PROTEIN 4"/>
    <property type="match status" value="1"/>
</dbReference>
<dbReference type="PANTHER" id="PTHR46608:SF3">
    <property type="entry name" value="T-CELL IMMUNOGLOBULIN AND MUCIN DOMAIN-CONTAINING PROTEIN 4"/>
    <property type="match status" value="1"/>
</dbReference>
<dbReference type="Pfam" id="PF07686">
    <property type="entry name" value="V-set"/>
    <property type="match status" value="1"/>
</dbReference>
<dbReference type="SMART" id="SM00409">
    <property type="entry name" value="IG"/>
    <property type="match status" value="1"/>
</dbReference>
<dbReference type="SUPFAM" id="SSF48726">
    <property type="entry name" value="Immunoglobulin"/>
    <property type="match status" value="1"/>
</dbReference>
<dbReference type="PROSITE" id="PS50835">
    <property type="entry name" value="IG_LIKE"/>
    <property type="match status" value="1"/>
</dbReference>
<evidence type="ECO:0000250" key="1">
    <source>
        <dbReference type="UniProtKB" id="Q96H15"/>
    </source>
</evidence>
<evidence type="ECO:0000255" key="2"/>
<evidence type="ECO:0000255" key="3">
    <source>
        <dbReference type="PROSITE-ProRule" id="PRU00114"/>
    </source>
</evidence>
<evidence type="ECO:0000256" key="4">
    <source>
        <dbReference type="SAM" id="MobiDB-lite"/>
    </source>
</evidence>
<evidence type="ECO:0000269" key="5">
    <source>
    </source>
</evidence>
<evidence type="ECO:0000269" key="6">
    <source>
    </source>
</evidence>
<evidence type="ECO:0000269" key="7">
    <source>
    </source>
</evidence>
<evidence type="ECO:0000269" key="8">
    <source>
    </source>
</evidence>
<evidence type="ECO:0000269" key="9">
    <source>
    </source>
</evidence>
<evidence type="ECO:0000269" key="10">
    <source>
    </source>
</evidence>
<evidence type="ECO:0000305" key="11"/>
<evidence type="ECO:0000305" key="12">
    <source>
    </source>
</evidence>
<evidence type="ECO:0000305" key="13">
    <source>
    </source>
</evidence>
<evidence type="ECO:0007744" key="14">
    <source>
    </source>
</evidence>
<evidence type="ECO:0007829" key="15">
    <source>
        <dbReference type="PDB" id="3BIA"/>
    </source>
</evidence>
<proteinExistence type="evidence at protein level"/>
<feature type="signal peptide" evidence="2">
    <location>
        <begin position="1"/>
        <end position="22"/>
    </location>
</feature>
<feature type="chain" id="PRO_0000042104" description="T-cell immunoglobulin and mucin domain-containing protein 4">
    <location>
        <begin position="23"/>
        <end position="343"/>
    </location>
</feature>
<feature type="topological domain" description="Extracellular" evidence="2">
    <location>
        <begin position="23"/>
        <end position="279"/>
    </location>
</feature>
<feature type="transmembrane region" description="Helical" evidence="2">
    <location>
        <begin position="280"/>
        <end position="300"/>
    </location>
</feature>
<feature type="topological domain" description="Cytoplasmic" evidence="2">
    <location>
        <begin position="301"/>
        <end position="343"/>
    </location>
</feature>
<feature type="domain" description="Ig-like V-type">
    <location>
        <begin position="23"/>
        <end position="128"/>
    </location>
</feature>
<feature type="region of interest" description="Disordered" evidence="4">
    <location>
        <begin position="239"/>
        <end position="258"/>
    </location>
</feature>
<feature type="region of interest" description="Disordered" evidence="4">
    <location>
        <begin position="313"/>
        <end position="343"/>
    </location>
</feature>
<feature type="compositionally biased region" description="Low complexity" evidence="4">
    <location>
        <begin position="248"/>
        <end position="258"/>
    </location>
</feature>
<feature type="modified residue" description="Phosphoserine" evidence="14">
    <location>
        <position position="323"/>
    </location>
</feature>
<feature type="modified residue" description="Phosphoserine" evidence="14">
    <location>
        <position position="325"/>
    </location>
</feature>
<feature type="modified residue" description="Phosphoserine" evidence="14">
    <location>
        <position position="331"/>
    </location>
</feature>
<feature type="glycosylation site" description="N-linked (GlcNAc...) asparagine" evidence="2">
    <location>
        <position position="220"/>
    </location>
</feature>
<feature type="disulfide bond" evidence="3 7">
    <location>
        <begin position="40"/>
        <end position="112"/>
    </location>
</feature>
<feature type="disulfide bond" evidence="3 7">
    <location>
        <begin position="53"/>
        <end position="64"/>
    </location>
</feature>
<feature type="disulfide bond" evidence="3 7">
    <location>
        <begin position="59"/>
        <end position="111"/>
    </location>
</feature>
<feature type="sequence variant" description="In strain: C57BL/6." evidence="5">
    <original>T</original>
    <variation>M</variation>
    <location>
        <position position="12"/>
    </location>
</feature>
<feature type="sequence variant" description="In strain: C57BL/6." evidence="5">
    <original>F</original>
    <variation>I</variation>
    <location>
        <position position="209"/>
    </location>
</feature>
<feature type="strand" evidence="15">
    <location>
        <begin position="26"/>
        <end position="31"/>
    </location>
</feature>
<feature type="strand" evidence="15">
    <location>
        <begin position="36"/>
        <end position="38"/>
    </location>
</feature>
<feature type="turn" evidence="15">
    <location>
        <begin position="47"/>
        <end position="49"/>
    </location>
</feature>
<feature type="strand" evidence="15">
    <location>
        <begin position="51"/>
        <end position="58"/>
    </location>
</feature>
<feature type="strand" evidence="15">
    <location>
        <begin position="61"/>
        <end position="63"/>
    </location>
</feature>
<feature type="strand" evidence="15">
    <location>
        <begin position="67"/>
        <end position="71"/>
    </location>
</feature>
<feature type="strand" evidence="15">
    <location>
        <begin position="73"/>
        <end position="81"/>
    </location>
</feature>
<feature type="strand" evidence="15">
    <location>
        <begin position="84"/>
        <end position="86"/>
    </location>
</feature>
<feature type="helix" evidence="15">
    <location>
        <begin position="90"/>
        <end position="92"/>
    </location>
</feature>
<feature type="strand" evidence="15">
    <location>
        <begin position="97"/>
        <end position="99"/>
    </location>
</feature>
<feature type="helix" evidence="15">
    <location>
        <begin position="104"/>
        <end position="106"/>
    </location>
</feature>
<feature type="strand" evidence="15">
    <location>
        <begin position="108"/>
        <end position="115"/>
    </location>
</feature>
<feature type="strand" evidence="15">
    <location>
        <begin position="117"/>
        <end position="120"/>
    </location>
</feature>
<feature type="strand" evidence="15">
    <location>
        <begin position="123"/>
        <end position="132"/>
    </location>
</feature>
<accession>Q6U7R4</accession>
<accession>Q6U7R3</accession>
<accession>Q8CIC7</accession>
<name>TIMD4_MOUSE</name>
<reference key="1">
    <citation type="journal article" date="2004" name="Eur. J. Immunol.">
        <title>SMUCKLER/TIM4 is a distinct member of TIM family expressed by stromal cells of secondary lymphoid tissues and associated with lymphotoxin signaling.</title>
        <authorList>
            <person name="Shakhov A.N."/>
            <person name="Rybtsov S."/>
            <person name="Tumanov A.V."/>
            <person name="Shulenin S."/>
            <person name="Dean M."/>
            <person name="Kuprash D.V."/>
            <person name="Nedospasov S.A."/>
        </authorList>
    </citation>
    <scope>NUCLEOTIDE SEQUENCE [MRNA]</scope>
    <scope>VARIANTS MET-12 AND ILE-209</scope>
    <scope>FUNCTION</scope>
    <scope>INDUCTION</scope>
    <scope>TISSUE SPECIFICITY</scope>
    <source>
        <strain>BALB/cJ</strain>
        <strain>C57BL/6J</strain>
    </source>
</reference>
<reference key="2">
    <citation type="journal article" date="2005" name="Nat. Immunol.">
        <title>TIM-4 is the ligand for TIM-1, and the TIM-1-TIM-4 interaction regulates T cell proliferation.</title>
        <authorList>
            <person name="Meyers J.H."/>
            <person name="Chakravarti S."/>
            <person name="Schlesinger D."/>
            <person name="Illes Z."/>
            <person name="Waldner H."/>
            <person name="Umetsu S.E."/>
            <person name="Kenny J."/>
            <person name="Zheng X.X."/>
            <person name="Umetsu D.T."/>
            <person name="DeKruyff R.H."/>
            <person name="Strom T.B."/>
            <person name="Kuchroo V.K."/>
        </authorList>
    </citation>
    <scope>FUNCTION</scope>
    <scope>INTERACTION WITH HAVCR1/TIM1</scope>
</reference>
<reference key="3">
    <citation type="journal article" date="2007" name="Nature">
        <title>Identification of Tim4 as a phosphatidylserine receptor.</title>
        <authorList>
            <person name="Miyanishi M."/>
            <person name="Tada K."/>
            <person name="Koike M."/>
            <person name="Uchiyama Y."/>
            <person name="Kitamura T."/>
            <person name="Nagata S."/>
        </authorList>
    </citation>
    <scope>FUNCTION</scope>
    <scope>TISSUE SPECIFICITY</scope>
    <scope>SUBUNIT</scope>
</reference>
<reference key="4">
    <citation type="journal article" date="2008" name="J. Immunol.">
        <title>TIM-4 expressed on APCs induces T cell expansion and survival.</title>
        <authorList>
            <person name="Rodriguez-Manzanet R."/>
            <person name="Meyers J.H."/>
            <person name="Balasubramanian S."/>
            <person name="Slavik J."/>
            <person name="Kassam N."/>
            <person name="Dardalhon V."/>
            <person name="Greenfield E.A."/>
            <person name="Anderson A.C."/>
            <person name="Sobel R.A."/>
            <person name="Hafler D.A."/>
            <person name="Strom T.B."/>
            <person name="Kuchroo V.K."/>
        </authorList>
    </citation>
    <scope>FUNCTION</scope>
    <scope>TISSUE SPECIFICITY</scope>
</reference>
<reference key="5">
    <citation type="journal article" date="2008" name="Int. Immunol.">
        <title>Bimodal regulation of T cell-mediated immune responses by TIM-4.</title>
        <authorList>
            <person name="Mizui M."/>
            <person name="Shikina T."/>
            <person name="Arase H."/>
            <person name="Suzuki K."/>
            <person name="Yasui T."/>
            <person name="Rennert P.D."/>
            <person name="Kumanogoh A."/>
            <person name="Kikutani H."/>
        </authorList>
    </citation>
    <scope>FUNCTION</scope>
</reference>
<reference key="6">
    <citation type="journal article" date="2019" name="J. Immunol.">
        <title>Tim-4 Inhibits NLRP3 Inflammasome via the LKB1/AMPKalpha Pathway in Macrophages.</title>
        <authorList>
            <person name="Liu W."/>
            <person name="Bai F."/>
            <person name="Wang H."/>
            <person name="Liang Y."/>
            <person name="Du X."/>
            <person name="Liu C."/>
            <person name="Cai D."/>
            <person name="Peng J."/>
            <person name="Zhong G."/>
            <person name="Liang X."/>
            <person name="Ma C."/>
            <person name="Gao L."/>
        </authorList>
    </citation>
    <scope>FUNCTION</scope>
    <scope>DISRUPTION PHENOTYPE</scope>
</reference>
<reference key="7">
    <citation type="journal article" date="2010" name="Cell">
        <title>A tissue-specific atlas of mouse protein phosphorylation and expression.</title>
        <authorList>
            <person name="Huttlin E.L."/>
            <person name="Jedrychowski M.P."/>
            <person name="Elias J.E."/>
            <person name="Goswami T."/>
            <person name="Rad R."/>
            <person name="Beausoleil S.A."/>
            <person name="Villen J."/>
            <person name="Haas W."/>
            <person name="Sowa M.E."/>
            <person name="Gygi S.P."/>
        </authorList>
    </citation>
    <scope>PHOSPHORYLATION [LARGE SCALE ANALYSIS] AT SER-323; SER-325 AND SER-331</scope>
    <scope>IDENTIFICATION BY MASS SPECTROMETRY [LARGE SCALE ANALYSIS]</scope>
    <source>
        <tissue>Spleen</tissue>
    </source>
</reference>
<reference key="8">
    <citation type="journal article" date="2007" name="Immunity">
        <title>Structures of T cell immunoglobulin mucin protein 4 show a metal-ion-dependent ligand binding site where phosphatidylserine binds.</title>
        <authorList>
            <person name="Santiago C."/>
            <person name="Ballesteros A."/>
            <person name="Martinez-Munoz L."/>
            <person name="Mellado M."/>
            <person name="Kaplan G.G."/>
            <person name="Freeman G.J."/>
            <person name="Casasnovas J.M."/>
        </authorList>
    </citation>
    <scope>X-RAY CRYSTALLOGRAPHY (2.2 ANGSTROMS) OF 25-134 IN COMPLEX WITH PHOSPHATIDYLSERINE</scope>
    <scope>DISULFIDE BONDS</scope>
</reference>
<comment type="function">
    <text evidence="1 6 8 9 10">Phosphatidylserine receptor that plays different role in immune response including phagocytosis of apoptotic cells and T-cell regulation (PubMed:17960135). Controls T-cell activation in a bimodal fashion, decreasing the activation of naive T-cells by inducing cell cycle arrest, while increasing proliferation of activated T-cells by activating AKT1 and ERK1/2 phosphorylations and subsequent signaling pathways. Also plays a role in efferocytosis which is the process by which apoptotic cells are removed by phagocytic cells (PubMed:18354194, PubMed:18367551). Mechanistically, promotes the engulfment of apoptotic cells or exogenous particles by securing them to phagocytes through direct binding to phosphatidylserine present on apoptotic cells, while other engulfment receptors such as MERTK efficiently recognize apoptotic cells and mediate their ingestion (By similarity). Additionally, promotes autophagy process by suppressing NLRP3 inflammasome activity via activation of STK11/PRKAA1 pathway in a phosphatidylserine-dependent mechanism (PubMed:31263038).</text>
</comment>
<comment type="subunit">
    <text evidence="12 13">Homodimer.</text>
</comment>
<comment type="interaction">
    <interactant intactId="EBI-16764486">
        <id>Q6U7R4</id>
    </interactant>
    <interactant intactId="EBI-20217708">
        <id>Q5QNS5</id>
        <label>Havcr1</label>
    </interactant>
    <organismsDiffer>false</organismsDiffer>
    <experiments>4</experiments>
</comment>
<comment type="interaction">
    <interactant intactId="EBI-16764486">
        <id>Q6U7R4</id>
    </interactant>
    <interactant intactId="EBI-20217763">
        <id>Q5QNS5-2</id>
        <label>Havcr1</label>
    </interactant>
    <organismsDiffer>false</organismsDiffer>
    <experiments>2</experiments>
</comment>
<comment type="subcellular location">
    <subcellularLocation>
        <location evidence="11">Membrane</location>
        <topology evidence="11">Single-pass type I membrane protein</topology>
    </subcellularLocation>
</comment>
<comment type="tissue specificity">
    <text evidence="5 6 8">Predominantly expressed in lymphoid tissues, such as spleen, lymph nodes, and Peyer patches. Also expressed in fetal liver, salivary gland, and spleen stromal cells, predominantly in the marginal zone and to a lesser extent throughout the white pulp. Not expressed in bone marrow-derived cells. Expressed mainly by antigen presenting cells (APCs) in T- and B-cell areas, but not by T- or B-lymphocytes.</text>
</comment>
<comment type="induction">
    <text evidence="5">Down-regulated in lymphotoxin deficient mice.</text>
</comment>
<comment type="disruption phenotype">
    <text evidence="10">Deletion mice maintained on methionine and choline-deficient diet exhibit significantly more obvious inflammation and severe lipid accumulation.</text>
</comment>
<comment type="miscellaneous">
    <text>Belongs to the T-cell and airway phenotype regulator (Tapr) locus, a single chromosomal region that confers reduced T-helper type 2 responsiveness and protects against airway hyperactivity (AHR), the hallmark of human asthma.</text>
</comment>
<comment type="miscellaneous">
    <text>Low expression of Timd4 is associated with lymphotoxin deficiency.</text>
</comment>
<comment type="similarity">
    <text evidence="11">Belongs to the immunoglobulin superfamily. TIM family.</text>
</comment>
<sequence length="343" mass="37548">MSKGLLLLWLVTELWWLYLTPAASEDTIIGFLGQPVTLPCHYLSWSQSRNSMCWGKGSCPNSKCNAELLRTDGTRIISRKSTKYTLLGKVQFGEVSLTISNTNRGDSGVYCCRIEVPGWFNDVKKNVRLELRRATTTKKPTTTTRPTTTPYVTTTTPELLPTTVMTTSVLPTTTPPQTLATTAFSTAVTTCPSTTPGSFSQETTKGSAFTTESETLPASNHSQRSMMTISTDIAVLRPTGSNPGILPSTSQLTTQKTTLTTSESLQKTTKSHQINSRQTILIIACCVGFVLMVLLFLAFLLRGKVTGANCLQRHKRPDNTEDSDSVLNDMSHGRDDEDGIFTL</sequence>
<protein>
    <recommendedName>
        <fullName>T-cell immunoglobulin and mucin domain-containing protein 4</fullName>
        <shortName>TIMD-4</shortName>
    </recommendedName>
    <alternativeName>
        <fullName>Spleen, mucin-containing, knockout of lymphotoxin protein</fullName>
        <shortName>SMUCKLER</shortName>
    </alternativeName>
    <alternativeName>
        <fullName>T-cell immunoglobulin mucin receptor 4</fullName>
        <shortName>TIM-4</shortName>
    </alternativeName>
    <alternativeName>
        <fullName>T-cell membrane protein 4</fullName>
    </alternativeName>
</protein>